<organism>
    <name type="scientific">Roseiflexus castenholzii (strain DSM 13941 / HLO8)</name>
    <dbReference type="NCBI Taxonomy" id="383372"/>
    <lineage>
        <taxon>Bacteria</taxon>
        <taxon>Bacillati</taxon>
        <taxon>Chloroflexota</taxon>
        <taxon>Chloroflexia</taxon>
        <taxon>Chloroflexales</taxon>
        <taxon>Roseiflexineae</taxon>
        <taxon>Roseiflexaceae</taxon>
        <taxon>Roseiflexus</taxon>
    </lineage>
</organism>
<accession>A7NH10</accession>
<reference key="1">
    <citation type="submission" date="2007-08" db="EMBL/GenBank/DDBJ databases">
        <title>Complete sequence of Roseiflexus castenholzii DSM 13941.</title>
        <authorList>
            <consortium name="US DOE Joint Genome Institute"/>
            <person name="Copeland A."/>
            <person name="Lucas S."/>
            <person name="Lapidus A."/>
            <person name="Barry K."/>
            <person name="Glavina del Rio T."/>
            <person name="Dalin E."/>
            <person name="Tice H."/>
            <person name="Pitluck S."/>
            <person name="Thompson L.S."/>
            <person name="Brettin T."/>
            <person name="Bruce D."/>
            <person name="Detter J.C."/>
            <person name="Han C."/>
            <person name="Tapia R."/>
            <person name="Schmutz J."/>
            <person name="Larimer F."/>
            <person name="Land M."/>
            <person name="Hauser L."/>
            <person name="Kyrpides N."/>
            <person name="Mikhailova N."/>
            <person name="Bryant D.A."/>
            <person name="Hanada S."/>
            <person name="Tsukatani Y."/>
            <person name="Richardson P."/>
        </authorList>
    </citation>
    <scope>NUCLEOTIDE SEQUENCE [LARGE SCALE GENOMIC DNA]</scope>
    <source>
        <strain>DSM 13941 / HLO8</strain>
    </source>
</reference>
<comment type="function">
    <text evidence="1">Catalyzes amidations at positions B, D, E, and G on adenosylcobyrinic A,C-diamide. NH(2) groups are provided by glutamine, and one molecule of ATP is hydrogenolyzed for each amidation.</text>
</comment>
<comment type="pathway">
    <text evidence="1">Cofactor biosynthesis; adenosylcobalamin biosynthesis.</text>
</comment>
<comment type="similarity">
    <text evidence="1">Belongs to the CobB/CobQ family. CobQ subfamily.</text>
</comment>
<name>COBQ_ROSCS</name>
<dbReference type="EMBL" id="CP000804">
    <property type="protein sequence ID" value="ABU56757.1"/>
    <property type="molecule type" value="Genomic_DNA"/>
</dbReference>
<dbReference type="RefSeq" id="WP_012119188.1">
    <property type="nucleotide sequence ID" value="NC_009767.1"/>
</dbReference>
<dbReference type="STRING" id="383372.Rcas_0632"/>
<dbReference type="KEGG" id="rca:Rcas_0632"/>
<dbReference type="eggNOG" id="COG1492">
    <property type="taxonomic scope" value="Bacteria"/>
</dbReference>
<dbReference type="HOGENOM" id="CLU_019250_2_2_0"/>
<dbReference type="OrthoDB" id="9808302at2"/>
<dbReference type="UniPathway" id="UPA00148"/>
<dbReference type="Proteomes" id="UP000000263">
    <property type="component" value="Chromosome"/>
</dbReference>
<dbReference type="GO" id="GO:0015420">
    <property type="term" value="F:ABC-type vitamin B12 transporter activity"/>
    <property type="evidence" value="ECO:0007669"/>
    <property type="project" value="UniProtKB-UniRule"/>
</dbReference>
<dbReference type="GO" id="GO:0003824">
    <property type="term" value="F:catalytic activity"/>
    <property type="evidence" value="ECO:0007669"/>
    <property type="project" value="InterPro"/>
</dbReference>
<dbReference type="GO" id="GO:0009236">
    <property type="term" value="P:cobalamin biosynthetic process"/>
    <property type="evidence" value="ECO:0007669"/>
    <property type="project" value="UniProtKB-UniRule"/>
</dbReference>
<dbReference type="CDD" id="cd05389">
    <property type="entry name" value="CobQ_N"/>
    <property type="match status" value="1"/>
</dbReference>
<dbReference type="CDD" id="cd01750">
    <property type="entry name" value="GATase1_CobQ"/>
    <property type="match status" value="1"/>
</dbReference>
<dbReference type="Gene3D" id="3.40.50.880">
    <property type="match status" value="1"/>
</dbReference>
<dbReference type="Gene3D" id="3.40.50.300">
    <property type="entry name" value="P-loop containing nucleotide triphosphate hydrolases"/>
    <property type="match status" value="1"/>
</dbReference>
<dbReference type="HAMAP" id="MF_00028">
    <property type="entry name" value="CobQ"/>
    <property type="match status" value="1"/>
</dbReference>
<dbReference type="InterPro" id="IPR029062">
    <property type="entry name" value="Class_I_gatase-like"/>
</dbReference>
<dbReference type="InterPro" id="IPR002586">
    <property type="entry name" value="CobQ/CobB/MinD/ParA_Nub-bd_dom"/>
</dbReference>
<dbReference type="InterPro" id="IPR033949">
    <property type="entry name" value="CobQ_GATase1"/>
</dbReference>
<dbReference type="InterPro" id="IPR047045">
    <property type="entry name" value="CobQ_N"/>
</dbReference>
<dbReference type="InterPro" id="IPR004459">
    <property type="entry name" value="CobQ_synth"/>
</dbReference>
<dbReference type="InterPro" id="IPR011698">
    <property type="entry name" value="GATase_3"/>
</dbReference>
<dbReference type="InterPro" id="IPR027417">
    <property type="entry name" value="P-loop_NTPase"/>
</dbReference>
<dbReference type="NCBIfam" id="TIGR00313">
    <property type="entry name" value="cobQ"/>
    <property type="match status" value="1"/>
</dbReference>
<dbReference type="NCBIfam" id="NF001989">
    <property type="entry name" value="PRK00784.1"/>
    <property type="match status" value="1"/>
</dbReference>
<dbReference type="PANTHER" id="PTHR21343:SF1">
    <property type="entry name" value="COBYRIC ACID SYNTHASE"/>
    <property type="match status" value="1"/>
</dbReference>
<dbReference type="PANTHER" id="PTHR21343">
    <property type="entry name" value="DETHIOBIOTIN SYNTHETASE"/>
    <property type="match status" value="1"/>
</dbReference>
<dbReference type="Pfam" id="PF01656">
    <property type="entry name" value="CbiA"/>
    <property type="match status" value="1"/>
</dbReference>
<dbReference type="Pfam" id="PF07685">
    <property type="entry name" value="GATase_3"/>
    <property type="match status" value="1"/>
</dbReference>
<dbReference type="SUPFAM" id="SSF52317">
    <property type="entry name" value="Class I glutamine amidotransferase-like"/>
    <property type="match status" value="1"/>
</dbReference>
<dbReference type="SUPFAM" id="SSF52540">
    <property type="entry name" value="P-loop containing nucleoside triphosphate hydrolases"/>
    <property type="match status" value="1"/>
</dbReference>
<dbReference type="PROSITE" id="PS51274">
    <property type="entry name" value="GATASE_COBBQ"/>
    <property type="match status" value="1"/>
</dbReference>
<evidence type="ECO:0000255" key="1">
    <source>
        <dbReference type="HAMAP-Rule" id="MF_00028"/>
    </source>
</evidence>
<sequence length="490" mass="53606">MTAPVIMVLGTASSVGKSVLVTALCRLARQRGLRVAPFKAQNMSNNAAVTADGREIARSVAVQAAAAQIEPTVEMNPILIKPEGQRRSQIVVEGRPWRTLDALDFWRRKEMLWEIVTRNLDALRARCDLVIAEGAGSPVELNLKAGDIVNMRVARYVGARCVLVGDIDTGGIFAQLLGTLMLLEPEERELVQGLLVNRFRGDPALFEDGVRILEQRSGLPVLGVIPWFEDLHLPEEDAVALERGNRLARDGLTIAVIHLPAIANFDDFDPLAREPGVTLRYITHPDDLSDAVAVILPGTKHTLAARRWLRERGFDVALHQFPGSIVGICGGYQLLGERISDPLGVEGQGGDEPGLGLLPVETIFSAAKLTVQADAVSRAPWAVGARLHGYEIHMGRTRSIDADRPLITVTQRGADAVEEHDGHISKDGRVWGCYLHGIFANDAFRRGWLQHLGWHPGEELNPSTDPFDHLAQHVAAAIGEKQVRWLFDIG</sequence>
<gene>
    <name evidence="1" type="primary">cobQ</name>
    <name type="ordered locus">Rcas_0632</name>
</gene>
<feature type="chain" id="PRO_0000332384" description="Cobyric acid synthase">
    <location>
        <begin position="1"/>
        <end position="490"/>
    </location>
</feature>
<feature type="domain" description="GATase cobBQ-type" evidence="1">
    <location>
        <begin position="251"/>
        <end position="444"/>
    </location>
</feature>
<feature type="active site" description="Nucleophile" evidence="1">
    <location>
        <position position="329"/>
    </location>
</feature>
<feature type="active site" evidence="1">
    <location>
        <position position="436"/>
    </location>
</feature>
<protein>
    <recommendedName>
        <fullName evidence="1">Cobyric acid synthase</fullName>
    </recommendedName>
</protein>
<proteinExistence type="inferred from homology"/>
<keyword id="KW-0169">Cobalamin biosynthesis</keyword>
<keyword id="KW-0315">Glutamine amidotransferase</keyword>
<keyword id="KW-1185">Reference proteome</keyword>